<organism>
    <name type="scientific">Drosophila virilis</name>
    <name type="common">Fruit fly</name>
    <dbReference type="NCBI Taxonomy" id="7244"/>
    <lineage>
        <taxon>Eukaryota</taxon>
        <taxon>Metazoa</taxon>
        <taxon>Ecdysozoa</taxon>
        <taxon>Arthropoda</taxon>
        <taxon>Hexapoda</taxon>
        <taxon>Insecta</taxon>
        <taxon>Pterygota</taxon>
        <taxon>Neoptera</taxon>
        <taxon>Endopterygota</taxon>
        <taxon>Diptera</taxon>
        <taxon>Brachycera</taxon>
        <taxon>Muscomorpha</taxon>
        <taxon>Ephydroidea</taxon>
        <taxon>Drosophilidae</taxon>
        <taxon>Drosophila</taxon>
    </lineage>
</organism>
<protein>
    <recommendedName>
        <fullName>Ubiquitin-like modifier-activating enzyme 5</fullName>
        <shortName>Ubiquitin-activating enzyme 5</shortName>
    </recommendedName>
</protein>
<name>UBA5_DROVI</name>
<evidence type="ECO:0000250" key="1"/>
<evidence type="ECO:0000305" key="2"/>
<keyword id="KW-0067">ATP-binding</keyword>
<keyword id="KW-0479">Metal-binding</keyword>
<keyword id="KW-0547">Nucleotide-binding</keyword>
<keyword id="KW-1185">Reference proteome</keyword>
<keyword id="KW-0833">Ubl conjugation pathway</keyword>
<keyword id="KW-0862">Zinc</keyword>
<gene>
    <name type="ORF">GJ19153</name>
</gene>
<accession>B4M357</accession>
<sequence length="400" mass="43994">MSNAIDELQAIIAELKSELEEQKTCTRNARERIERMSAEVVDSNPYSRLMALQRMNIVKDYERIRDKAVAIVGVGGVGSVTADMLTRCGIGKLILFDYDKVELANMNRLFFTPDQAGLSKVEAAARTLSFINPDVRIETHNYNITTVDNFDKFLSTISESGMQQGQPVDLVLSCVDNFEARMAINAACNENNLNWFESGVSENAVSGHIQFIRPGDTACFACAPPLVVAENIDERTLKREGVCAASLPTTMGITAGLLVQNALKYLLNFGEVSDYLGYNALNDFFPKMTLKPNTQCDDRHCLQRQKEFQERPKPVLQQVEEVSDEPLHASNDWGIELVADDAPVAEQAPKATDTANVASGLRLAYEAPEKEAVDQAGHAAAGDGMPETSLEDLMAQMKSM</sequence>
<reference key="1">
    <citation type="journal article" date="2007" name="Nature">
        <title>Evolution of genes and genomes on the Drosophila phylogeny.</title>
        <authorList>
            <consortium name="Drosophila 12 genomes consortium"/>
        </authorList>
    </citation>
    <scope>NUCLEOTIDE SEQUENCE [LARGE SCALE GENOMIC DNA]</scope>
    <source>
        <strain>Tucson 15010-1051.87</strain>
    </source>
</reference>
<proteinExistence type="inferred from homology"/>
<feature type="chain" id="PRO_0000391950" description="Ubiquitin-like modifier-activating enzyme 5">
    <location>
        <begin position="1"/>
        <end position="400"/>
    </location>
</feature>
<feature type="active site" description="Glycyl thioester intermediate" evidence="1">
    <location>
        <position position="243"/>
    </location>
</feature>
<feature type="binding site" evidence="1">
    <location>
        <position position="76"/>
    </location>
    <ligand>
        <name>ATP</name>
        <dbReference type="ChEBI" id="CHEBI:30616"/>
    </ligand>
</feature>
<feature type="binding site" evidence="1">
    <location>
        <position position="97"/>
    </location>
    <ligand>
        <name>ATP</name>
        <dbReference type="ChEBI" id="CHEBI:30616"/>
    </ligand>
</feature>
<feature type="binding site" evidence="1">
    <location>
        <position position="120"/>
    </location>
    <ligand>
        <name>ATP</name>
        <dbReference type="ChEBI" id="CHEBI:30616"/>
    </ligand>
</feature>
<feature type="binding site" evidence="1">
    <location>
        <position position="143"/>
    </location>
    <ligand>
        <name>ATP</name>
        <dbReference type="ChEBI" id="CHEBI:30616"/>
    </ligand>
</feature>
<feature type="binding site" evidence="1">
    <location>
        <position position="177"/>
    </location>
    <ligand>
        <name>ATP</name>
        <dbReference type="ChEBI" id="CHEBI:30616"/>
    </ligand>
</feature>
<feature type="binding site" evidence="1">
    <location>
        <position position="219"/>
    </location>
    <ligand>
        <name>Zn(2+)</name>
        <dbReference type="ChEBI" id="CHEBI:29105"/>
    </ligand>
</feature>
<feature type="binding site" evidence="1">
    <location>
        <position position="222"/>
    </location>
    <ligand>
        <name>Zn(2+)</name>
        <dbReference type="ChEBI" id="CHEBI:29105"/>
    </ligand>
</feature>
<feature type="binding site" evidence="1">
    <location>
        <position position="296"/>
    </location>
    <ligand>
        <name>Zn(2+)</name>
        <dbReference type="ChEBI" id="CHEBI:29105"/>
    </ligand>
</feature>
<feature type="binding site" evidence="1">
    <location>
        <position position="301"/>
    </location>
    <ligand>
        <name>Zn(2+)</name>
        <dbReference type="ChEBI" id="CHEBI:29105"/>
    </ligand>
</feature>
<dbReference type="EMBL" id="CH940651">
    <property type="protein sequence ID" value="EDW65232.1"/>
    <property type="molecule type" value="Genomic_DNA"/>
</dbReference>
<dbReference type="SMR" id="B4M357"/>
<dbReference type="FunCoup" id="B4M357">
    <property type="interactions" value="2380"/>
</dbReference>
<dbReference type="STRING" id="7244.B4M357"/>
<dbReference type="EnsemblMetazoa" id="FBtr0235078">
    <property type="protein sequence ID" value="FBpp0233570"/>
    <property type="gene ID" value="FBgn0206298"/>
</dbReference>
<dbReference type="EnsemblMetazoa" id="XM_002054995.3">
    <property type="protein sequence ID" value="XP_002055031.1"/>
    <property type="gene ID" value="LOC6631874"/>
</dbReference>
<dbReference type="GeneID" id="6631874"/>
<dbReference type="KEGG" id="dvi:6631874"/>
<dbReference type="CTD" id="79876"/>
<dbReference type="eggNOG" id="KOG2336">
    <property type="taxonomic scope" value="Eukaryota"/>
</dbReference>
<dbReference type="HOGENOM" id="CLU_013325_0_1_1"/>
<dbReference type="InParanoid" id="B4M357"/>
<dbReference type="OMA" id="MNIVKDY"/>
<dbReference type="OrthoDB" id="206053at2759"/>
<dbReference type="PhylomeDB" id="B4M357"/>
<dbReference type="Proteomes" id="UP000008792">
    <property type="component" value="Unassembled WGS sequence"/>
</dbReference>
<dbReference type="GO" id="GO:0005829">
    <property type="term" value="C:cytosol"/>
    <property type="evidence" value="ECO:0007669"/>
    <property type="project" value="TreeGrafter"/>
</dbReference>
<dbReference type="GO" id="GO:0005524">
    <property type="term" value="F:ATP binding"/>
    <property type="evidence" value="ECO:0007669"/>
    <property type="project" value="UniProtKB-KW"/>
</dbReference>
<dbReference type="GO" id="GO:0046872">
    <property type="term" value="F:metal ion binding"/>
    <property type="evidence" value="ECO:0007669"/>
    <property type="project" value="UniProtKB-KW"/>
</dbReference>
<dbReference type="GO" id="GO:0071566">
    <property type="term" value="F:UFM1 activating enzyme activity"/>
    <property type="evidence" value="ECO:0007669"/>
    <property type="project" value="TreeGrafter"/>
</dbReference>
<dbReference type="GO" id="GO:0050905">
    <property type="term" value="P:neuromuscular process"/>
    <property type="evidence" value="ECO:0007669"/>
    <property type="project" value="EnsemblMetazoa"/>
</dbReference>
<dbReference type="GO" id="GO:0071569">
    <property type="term" value="P:protein ufmylation"/>
    <property type="evidence" value="ECO:0007669"/>
    <property type="project" value="TreeGrafter"/>
</dbReference>
<dbReference type="CDD" id="cd00757">
    <property type="entry name" value="ThiF_MoeB_HesA_family"/>
    <property type="match status" value="1"/>
</dbReference>
<dbReference type="FunFam" id="3.40.50.720:FF:000066">
    <property type="entry name" value="Putative ubiquitin-like modifier-activating enzyme 5"/>
    <property type="match status" value="1"/>
</dbReference>
<dbReference type="Gene3D" id="3.40.50.720">
    <property type="entry name" value="NAD(P)-binding Rossmann-like Domain"/>
    <property type="match status" value="1"/>
</dbReference>
<dbReference type="InterPro" id="IPR029752">
    <property type="entry name" value="D-isomer_DH_CS1"/>
</dbReference>
<dbReference type="InterPro" id="IPR045886">
    <property type="entry name" value="ThiF/MoeB/HesA"/>
</dbReference>
<dbReference type="InterPro" id="IPR000594">
    <property type="entry name" value="ThiF_NAD_FAD-bd"/>
</dbReference>
<dbReference type="InterPro" id="IPR035985">
    <property type="entry name" value="Ubiquitin-activating_enz"/>
</dbReference>
<dbReference type="PANTHER" id="PTHR10953">
    <property type="entry name" value="UBIQUITIN-ACTIVATING ENZYME E1"/>
    <property type="match status" value="1"/>
</dbReference>
<dbReference type="PANTHER" id="PTHR10953:SF9">
    <property type="entry name" value="UBIQUITIN-LIKE MODIFIER-ACTIVATING ENZYME 5"/>
    <property type="match status" value="1"/>
</dbReference>
<dbReference type="Pfam" id="PF00899">
    <property type="entry name" value="ThiF"/>
    <property type="match status" value="1"/>
</dbReference>
<dbReference type="SUPFAM" id="SSF69572">
    <property type="entry name" value="Activating enzymes of the ubiquitin-like proteins"/>
    <property type="match status" value="1"/>
</dbReference>
<comment type="function">
    <text evidence="1">E1-like enzyme which activates UFM1.</text>
</comment>
<comment type="similarity">
    <text evidence="2">Belongs to the ubiquitin-activating E1 family. UBA5 subfamily.</text>
</comment>